<protein>
    <recommendedName>
        <fullName evidence="1">Adenylate kinase</fullName>
        <shortName evidence="1">AK</shortName>
        <ecNumber evidence="1">2.7.4.3</ecNumber>
    </recommendedName>
    <alternativeName>
        <fullName evidence="1">ATP-AMP transphosphorylase</fullName>
    </alternativeName>
    <alternativeName>
        <fullName evidence="1">ATP:AMP phosphotransferase</fullName>
    </alternativeName>
    <alternativeName>
        <fullName evidence="1">Adenylate monophosphate kinase</fullName>
    </alternativeName>
</protein>
<reference key="1">
    <citation type="journal article" date="2005" name="Proc. Natl. Acad. Sci. U.S.A.">
        <title>Comparison of the complete genome sequences of Pseudomonas syringae pv. syringae B728a and pv. tomato DC3000.</title>
        <authorList>
            <person name="Feil H."/>
            <person name="Feil W.S."/>
            <person name="Chain P."/>
            <person name="Larimer F."/>
            <person name="Dibartolo G."/>
            <person name="Copeland A."/>
            <person name="Lykidis A."/>
            <person name="Trong S."/>
            <person name="Nolan M."/>
            <person name="Goltsman E."/>
            <person name="Thiel J."/>
            <person name="Malfatti S."/>
            <person name="Loper J.E."/>
            <person name="Lapidus A."/>
            <person name="Detter J.C."/>
            <person name="Land M."/>
            <person name="Richardson P.M."/>
            <person name="Kyrpides N.C."/>
            <person name="Ivanova N."/>
            <person name="Lindow S.E."/>
        </authorList>
    </citation>
    <scope>NUCLEOTIDE SEQUENCE [LARGE SCALE GENOMIC DNA]</scope>
    <source>
        <strain>B728a</strain>
    </source>
</reference>
<name>KAD_PSEU2</name>
<comment type="function">
    <text evidence="1">Catalyzes the reversible transfer of the terminal phosphate group between ATP and AMP. Plays an important role in cellular energy homeostasis and in adenine nucleotide metabolism.</text>
</comment>
<comment type="catalytic activity">
    <reaction evidence="1">
        <text>AMP + ATP = 2 ADP</text>
        <dbReference type="Rhea" id="RHEA:12973"/>
        <dbReference type="ChEBI" id="CHEBI:30616"/>
        <dbReference type="ChEBI" id="CHEBI:456215"/>
        <dbReference type="ChEBI" id="CHEBI:456216"/>
        <dbReference type="EC" id="2.7.4.3"/>
    </reaction>
</comment>
<comment type="pathway">
    <text evidence="1">Purine metabolism; AMP biosynthesis via salvage pathway; AMP from ADP: step 1/1.</text>
</comment>
<comment type="subunit">
    <text evidence="1">Monomer.</text>
</comment>
<comment type="subcellular location">
    <subcellularLocation>
        <location evidence="1">Cytoplasm</location>
    </subcellularLocation>
</comment>
<comment type="domain">
    <text evidence="1">Consists of three domains, a large central CORE domain and two small peripheral domains, NMPbind and LID, which undergo movements during catalysis. The LID domain closes over the site of phosphoryl transfer upon ATP binding. Assembling and dissambling the active center during each catalytic cycle provides an effective means to prevent ATP hydrolysis.</text>
</comment>
<comment type="similarity">
    <text evidence="1">Belongs to the adenylate kinase family.</text>
</comment>
<dbReference type="EC" id="2.7.4.3" evidence="1"/>
<dbReference type="EMBL" id="CP000075">
    <property type="protein sequence ID" value="AAY36370.1"/>
    <property type="molecule type" value="Genomic_DNA"/>
</dbReference>
<dbReference type="RefSeq" id="WP_004406317.1">
    <property type="nucleotide sequence ID" value="NC_007005.1"/>
</dbReference>
<dbReference type="RefSeq" id="YP_234408.1">
    <property type="nucleotide sequence ID" value="NC_007005.1"/>
</dbReference>
<dbReference type="SMR" id="Q4ZWV2"/>
<dbReference type="STRING" id="205918.Psyr_1319"/>
<dbReference type="KEGG" id="psb:Psyr_1319"/>
<dbReference type="PATRIC" id="fig|205918.7.peg.1352"/>
<dbReference type="eggNOG" id="COG0563">
    <property type="taxonomic scope" value="Bacteria"/>
</dbReference>
<dbReference type="HOGENOM" id="CLU_032354_1_2_6"/>
<dbReference type="OrthoDB" id="9805030at2"/>
<dbReference type="UniPathway" id="UPA00588">
    <property type="reaction ID" value="UER00649"/>
</dbReference>
<dbReference type="Proteomes" id="UP000000426">
    <property type="component" value="Chromosome"/>
</dbReference>
<dbReference type="GO" id="GO:0005737">
    <property type="term" value="C:cytoplasm"/>
    <property type="evidence" value="ECO:0007669"/>
    <property type="project" value="UniProtKB-SubCell"/>
</dbReference>
<dbReference type="GO" id="GO:0004017">
    <property type="term" value="F:adenylate kinase activity"/>
    <property type="evidence" value="ECO:0007669"/>
    <property type="project" value="UniProtKB-UniRule"/>
</dbReference>
<dbReference type="GO" id="GO:0005524">
    <property type="term" value="F:ATP binding"/>
    <property type="evidence" value="ECO:0007669"/>
    <property type="project" value="UniProtKB-UniRule"/>
</dbReference>
<dbReference type="GO" id="GO:0044209">
    <property type="term" value="P:AMP salvage"/>
    <property type="evidence" value="ECO:0007669"/>
    <property type="project" value="UniProtKB-UniRule"/>
</dbReference>
<dbReference type="CDD" id="cd01428">
    <property type="entry name" value="ADK"/>
    <property type="match status" value="1"/>
</dbReference>
<dbReference type="FunFam" id="3.40.50.300:FF:000106">
    <property type="entry name" value="Adenylate kinase mitochondrial"/>
    <property type="match status" value="1"/>
</dbReference>
<dbReference type="Gene3D" id="3.40.50.300">
    <property type="entry name" value="P-loop containing nucleotide triphosphate hydrolases"/>
    <property type="match status" value="1"/>
</dbReference>
<dbReference type="HAMAP" id="MF_00235">
    <property type="entry name" value="Adenylate_kinase_Adk"/>
    <property type="match status" value="1"/>
</dbReference>
<dbReference type="InterPro" id="IPR006259">
    <property type="entry name" value="Adenyl_kin_sub"/>
</dbReference>
<dbReference type="InterPro" id="IPR000850">
    <property type="entry name" value="Adenylat/UMP-CMP_kin"/>
</dbReference>
<dbReference type="InterPro" id="IPR033690">
    <property type="entry name" value="Adenylat_kinase_CS"/>
</dbReference>
<dbReference type="InterPro" id="IPR007862">
    <property type="entry name" value="Adenylate_kinase_lid-dom"/>
</dbReference>
<dbReference type="InterPro" id="IPR027417">
    <property type="entry name" value="P-loop_NTPase"/>
</dbReference>
<dbReference type="NCBIfam" id="TIGR01351">
    <property type="entry name" value="adk"/>
    <property type="match status" value="1"/>
</dbReference>
<dbReference type="NCBIfam" id="NF001379">
    <property type="entry name" value="PRK00279.1-1"/>
    <property type="match status" value="1"/>
</dbReference>
<dbReference type="NCBIfam" id="NF001380">
    <property type="entry name" value="PRK00279.1-2"/>
    <property type="match status" value="1"/>
</dbReference>
<dbReference type="NCBIfam" id="NF001381">
    <property type="entry name" value="PRK00279.1-3"/>
    <property type="match status" value="1"/>
</dbReference>
<dbReference type="NCBIfam" id="NF011100">
    <property type="entry name" value="PRK14527.1"/>
    <property type="match status" value="1"/>
</dbReference>
<dbReference type="PANTHER" id="PTHR23359">
    <property type="entry name" value="NUCLEOTIDE KINASE"/>
    <property type="match status" value="1"/>
</dbReference>
<dbReference type="Pfam" id="PF00406">
    <property type="entry name" value="ADK"/>
    <property type="match status" value="1"/>
</dbReference>
<dbReference type="Pfam" id="PF05191">
    <property type="entry name" value="ADK_lid"/>
    <property type="match status" value="1"/>
</dbReference>
<dbReference type="PRINTS" id="PR00094">
    <property type="entry name" value="ADENYLTKNASE"/>
</dbReference>
<dbReference type="SUPFAM" id="SSF52540">
    <property type="entry name" value="P-loop containing nucleoside triphosphate hydrolases"/>
    <property type="match status" value="1"/>
</dbReference>
<dbReference type="PROSITE" id="PS00113">
    <property type="entry name" value="ADENYLATE_KINASE"/>
    <property type="match status" value="1"/>
</dbReference>
<organism>
    <name type="scientific">Pseudomonas syringae pv. syringae (strain B728a)</name>
    <dbReference type="NCBI Taxonomy" id="205918"/>
    <lineage>
        <taxon>Bacteria</taxon>
        <taxon>Pseudomonadati</taxon>
        <taxon>Pseudomonadota</taxon>
        <taxon>Gammaproteobacteria</taxon>
        <taxon>Pseudomonadales</taxon>
        <taxon>Pseudomonadaceae</taxon>
        <taxon>Pseudomonas</taxon>
        <taxon>Pseudomonas syringae</taxon>
    </lineage>
</organism>
<feature type="chain" id="PRO_1000058886" description="Adenylate kinase">
    <location>
        <begin position="1"/>
        <end position="215"/>
    </location>
</feature>
<feature type="region of interest" description="NMP" evidence="1">
    <location>
        <begin position="30"/>
        <end position="59"/>
    </location>
</feature>
<feature type="region of interest" description="LID" evidence="1">
    <location>
        <begin position="122"/>
        <end position="159"/>
    </location>
</feature>
<feature type="binding site" evidence="1">
    <location>
        <begin position="10"/>
        <end position="15"/>
    </location>
    <ligand>
        <name>ATP</name>
        <dbReference type="ChEBI" id="CHEBI:30616"/>
    </ligand>
</feature>
<feature type="binding site" evidence="1">
    <location>
        <position position="31"/>
    </location>
    <ligand>
        <name>AMP</name>
        <dbReference type="ChEBI" id="CHEBI:456215"/>
    </ligand>
</feature>
<feature type="binding site" evidence="1">
    <location>
        <position position="36"/>
    </location>
    <ligand>
        <name>AMP</name>
        <dbReference type="ChEBI" id="CHEBI:456215"/>
    </ligand>
</feature>
<feature type="binding site" evidence="1">
    <location>
        <begin position="57"/>
        <end position="59"/>
    </location>
    <ligand>
        <name>AMP</name>
        <dbReference type="ChEBI" id="CHEBI:456215"/>
    </ligand>
</feature>
<feature type="binding site" evidence="1">
    <location>
        <begin position="85"/>
        <end position="88"/>
    </location>
    <ligand>
        <name>AMP</name>
        <dbReference type="ChEBI" id="CHEBI:456215"/>
    </ligand>
</feature>
<feature type="binding site" evidence="1">
    <location>
        <position position="92"/>
    </location>
    <ligand>
        <name>AMP</name>
        <dbReference type="ChEBI" id="CHEBI:456215"/>
    </ligand>
</feature>
<feature type="binding site" evidence="1">
    <location>
        <position position="123"/>
    </location>
    <ligand>
        <name>ATP</name>
        <dbReference type="ChEBI" id="CHEBI:30616"/>
    </ligand>
</feature>
<feature type="binding site" evidence="1">
    <location>
        <begin position="132"/>
        <end position="133"/>
    </location>
    <ligand>
        <name>ATP</name>
        <dbReference type="ChEBI" id="CHEBI:30616"/>
    </ligand>
</feature>
<feature type="binding site" evidence="1">
    <location>
        <position position="156"/>
    </location>
    <ligand>
        <name>AMP</name>
        <dbReference type="ChEBI" id="CHEBI:456215"/>
    </ligand>
</feature>
<feature type="binding site" evidence="1">
    <location>
        <position position="167"/>
    </location>
    <ligand>
        <name>AMP</name>
        <dbReference type="ChEBI" id="CHEBI:456215"/>
    </ligand>
</feature>
<feature type="binding site" evidence="1">
    <location>
        <position position="201"/>
    </location>
    <ligand>
        <name>ATP</name>
        <dbReference type="ChEBI" id="CHEBI:30616"/>
    </ligand>
</feature>
<sequence>MRVILLGAPGAGKGTQAKFITEKFGIPQVSTGDMLRAAVKAETELGLKAKSVMDSGGLVSDDLIIGLIKDRLAEPDCANGVLFDGFPRTIPQAEALLNAGLEIDHVLEIAVDDEEIVKRMSGRRVHEGSGRIYHTIFNPPKVEGIDDVTGEPLLQRKDDVEETVRHRLSVYHAQTKPLVEFYSKLEAKNGKPKCSHIPGVGSVEDITAKVLKALS</sequence>
<proteinExistence type="inferred from homology"/>
<accession>Q4ZWV2</accession>
<keyword id="KW-0067">ATP-binding</keyword>
<keyword id="KW-0963">Cytoplasm</keyword>
<keyword id="KW-0418">Kinase</keyword>
<keyword id="KW-0545">Nucleotide biosynthesis</keyword>
<keyword id="KW-0547">Nucleotide-binding</keyword>
<keyword id="KW-0808">Transferase</keyword>
<gene>
    <name evidence="1" type="primary">adk</name>
    <name type="ordered locus">Psyr_1319</name>
</gene>
<evidence type="ECO:0000255" key="1">
    <source>
        <dbReference type="HAMAP-Rule" id="MF_00235"/>
    </source>
</evidence>